<accession>B6ISY8</accession>
<gene>
    <name evidence="1" type="primary">tig</name>
    <name type="ordered locus">RC1_1249</name>
</gene>
<comment type="function">
    <text evidence="1">Involved in protein export. Acts as a chaperone by maintaining the newly synthesized protein in an open conformation. Functions as a peptidyl-prolyl cis-trans isomerase.</text>
</comment>
<comment type="catalytic activity">
    <reaction evidence="1">
        <text>[protein]-peptidylproline (omega=180) = [protein]-peptidylproline (omega=0)</text>
        <dbReference type="Rhea" id="RHEA:16237"/>
        <dbReference type="Rhea" id="RHEA-COMP:10747"/>
        <dbReference type="Rhea" id="RHEA-COMP:10748"/>
        <dbReference type="ChEBI" id="CHEBI:83833"/>
        <dbReference type="ChEBI" id="CHEBI:83834"/>
        <dbReference type="EC" id="5.2.1.8"/>
    </reaction>
</comment>
<comment type="subcellular location">
    <subcellularLocation>
        <location>Cytoplasm</location>
    </subcellularLocation>
    <text evidence="1">About half TF is bound to the ribosome near the polypeptide exit tunnel while the other half is free in the cytoplasm.</text>
</comment>
<comment type="domain">
    <text evidence="1">Consists of 3 domains; the N-terminus binds the ribosome, the middle domain has PPIase activity, while the C-terminus has intrinsic chaperone activity on its own.</text>
</comment>
<comment type="similarity">
    <text evidence="1">Belongs to the FKBP-type PPIase family. Tig subfamily.</text>
</comment>
<protein>
    <recommendedName>
        <fullName evidence="1">Trigger factor</fullName>
        <shortName evidence="1">TF</shortName>
        <ecNumber evidence="1">5.2.1.8</ecNumber>
    </recommendedName>
    <alternativeName>
        <fullName evidence="1">PPIase</fullName>
    </alternativeName>
</protein>
<evidence type="ECO:0000255" key="1">
    <source>
        <dbReference type="HAMAP-Rule" id="MF_00303"/>
    </source>
</evidence>
<sequence length="448" mass="49796">MQITETSADGLRREFKVTVPADEIETRVANRLSEIGKTIKIPGFRPGKVPMALLKQRYGQSVMGEVLEQAVNDGSAKAVEEHKLRPALQPKVEVTKFEAGSDLEFSMAVELLPDFEPADMAAIAVEKPVVEVADAMVDDGLKRIAANRKTSAPLEAERPAQSGDIVVIDFDGSVDGEKRPGMKGEDHELELGSGSFIPGFEDQLVGAAKGEHRTVTVTFPENYHAAELSGKEAVFEVDVKDIRVPKAAEIDEDFAKSFGFDDLAGMRDAIRERMQADYASMSRMRAKRQLLDRLAETHDFPVPTGMVDIEFDQIWRRLQQELKDGEADPEDKEKDEEGLKAEYRAIAERRVRLGLLLSEVGRRNNITVTRDELGQAVVAEAQRYPGQERQVFDFFRNNPQAVEGLRAPIFEDKVVDFILGQVKLTERTVSVEDLMRDPEEDEGPTAAA</sequence>
<proteinExistence type="inferred from homology"/>
<dbReference type="EC" id="5.2.1.8" evidence="1"/>
<dbReference type="EMBL" id="CP000613">
    <property type="protein sequence ID" value="ACI98659.1"/>
    <property type="molecule type" value="Genomic_DNA"/>
</dbReference>
<dbReference type="RefSeq" id="WP_012566447.1">
    <property type="nucleotide sequence ID" value="NC_011420.2"/>
</dbReference>
<dbReference type="SMR" id="B6ISY8"/>
<dbReference type="STRING" id="414684.RC1_1249"/>
<dbReference type="KEGG" id="rce:RC1_1249"/>
<dbReference type="eggNOG" id="COG0544">
    <property type="taxonomic scope" value="Bacteria"/>
</dbReference>
<dbReference type="HOGENOM" id="CLU_033058_2_2_5"/>
<dbReference type="OrthoDB" id="9767721at2"/>
<dbReference type="Proteomes" id="UP000001591">
    <property type="component" value="Chromosome"/>
</dbReference>
<dbReference type="GO" id="GO:0005737">
    <property type="term" value="C:cytoplasm"/>
    <property type="evidence" value="ECO:0007669"/>
    <property type="project" value="UniProtKB-SubCell"/>
</dbReference>
<dbReference type="GO" id="GO:0003755">
    <property type="term" value="F:peptidyl-prolyl cis-trans isomerase activity"/>
    <property type="evidence" value="ECO:0007669"/>
    <property type="project" value="UniProtKB-UniRule"/>
</dbReference>
<dbReference type="GO" id="GO:0044183">
    <property type="term" value="F:protein folding chaperone"/>
    <property type="evidence" value="ECO:0007669"/>
    <property type="project" value="TreeGrafter"/>
</dbReference>
<dbReference type="GO" id="GO:0043022">
    <property type="term" value="F:ribosome binding"/>
    <property type="evidence" value="ECO:0007669"/>
    <property type="project" value="TreeGrafter"/>
</dbReference>
<dbReference type="GO" id="GO:0051083">
    <property type="term" value="P:'de novo' cotranslational protein folding"/>
    <property type="evidence" value="ECO:0007669"/>
    <property type="project" value="TreeGrafter"/>
</dbReference>
<dbReference type="GO" id="GO:0051301">
    <property type="term" value="P:cell division"/>
    <property type="evidence" value="ECO:0007669"/>
    <property type="project" value="UniProtKB-KW"/>
</dbReference>
<dbReference type="GO" id="GO:0061077">
    <property type="term" value="P:chaperone-mediated protein folding"/>
    <property type="evidence" value="ECO:0007669"/>
    <property type="project" value="TreeGrafter"/>
</dbReference>
<dbReference type="GO" id="GO:0015031">
    <property type="term" value="P:protein transport"/>
    <property type="evidence" value="ECO:0007669"/>
    <property type="project" value="UniProtKB-UniRule"/>
</dbReference>
<dbReference type="GO" id="GO:0043335">
    <property type="term" value="P:protein unfolding"/>
    <property type="evidence" value="ECO:0007669"/>
    <property type="project" value="TreeGrafter"/>
</dbReference>
<dbReference type="FunFam" id="3.10.50.40:FF:000001">
    <property type="entry name" value="Trigger factor"/>
    <property type="match status" value="1"/>
</dbReference>
<dbReference type="Gene3D" id="3.10.50.40">
    <property type="match status" value="1"/>
</dbReference>
<dbReference type="Gene3D" id="3.30.70.1050">
    <property type="entry name" value="Trigger factor ribosome-binding domain"/>
    <property type="match status" value="1"/>
</dbReference>
<dbReference type="Gene3D" id="1.10.3120.10">
    <property type="entry name" value="Trigger factor, C-terminal domain"/>
    <property type="match status" value="1"/>
</dbReference>
<dbReference type="HAMAP" id="MF_00303">
    <property type="entry name" value="Trigger_factor_Tig"/>
    <property type="match status" value="1"/>
</dbReference>
<dbReference type="InterPro" id="IPR046357">
    <property type="entry name" value="PPIase_dom_sf"/>
</dbReference>
<dbReference type="InterPro" id="IPR001179">
    <property type="entry name" value="PPIase_FKBP_dom"/>
</dbReference>
<dbReference type="InterPro" id="IPR005215">
    <property type="entry name" value="Trig_fac"/>
</dbReference>
<dbReference type="InterPro" id="IPR008880">
    <property type="entry name" value="Trigger_fac_C"/>
</dbReference>
<dbReference type="InterPro" id="IPR037041">
    <property type="entry name" value="Trigger_fac_C_sf"/>
</dbReference>
<dbReference type="InterPro" id="IPR008881">
    <property type="entry name" value="Trigger_fac_ribosome-bd_bac"/>
</dbReference>
<dbReference type="InterPro" id="IPR036611">
    <property type="entry name" value="Trigger_fac_ribosome-bd_sf"/>
</dbReference>
<dbReference type="InterPro" id="IPR027304">
    <property type="entry name" value="Trigger_fact/SurA_dom_sf"/>
</dbReference>
<dbReference type="NCBIfam" id="TIGR00115">
    <property type="entry name" value="tig"/>
    <property type="match status" value="1"/>
</dbReference>
<dbReference type="PANTHER" id="PTHR30560">
    <property type="entry name" value="TRIGGER FACTOR CHAPERONE AND PEPTIDYL-PROLYL CIS/TRANS ISOMERASE"/>
    <property type="match status" value="1"/>
</dbReference>
<dbReference type="PANTHER" id="PTHR30560:SF3">
    <property type="entry name" value="TRIGGER FACTOR-LIKE PROTEIN TIG, CHLOROPLASTIC"/>
    <property type="match status" value="1"/>
</dbReference>
<dbReference type="Pfam" id="PF00254">
    <property type="entry name" value="FKBP_C"/>
    <property type="match status" value="1"/>
</dbReference>
<dbReference type="Pfam" id="PF05698">
    <property type="entry name" value="Trigger_C"/>
    <property type="match status" value="1"/>
</dbReference>
<dbReference type="Pfam" id="PF05697">
    <property type="entry name" value="Trigger_N"/>
    <property type="match status" value="1"/>
</dbReference>
<dbReference type="PIRSF" id="PIRSF003095">
    <property type="entry name" value="Trigger_factor"/>
    <property type="match status" value="1"/>
</dbReference>
<dbReference type="SUPFAM" id="SSF54534">
    <property type="entry name" value="FKBP-like"/>
    <property type="match status" value="1"/>
</dbReference>
<dbReference type="SUPFAM" id="SSF109998">
    <property type="entry name" value="Triger factor/SurA peptide-binding domain-like"/>
    <property type="match status" value="1"/>
</dbReference>
<dbReference type="SUPFAM" id="SSF102735">
    <property type="entry name" value="Trigger factor ribosome-binding domain"/>
    <property type="match status" value="1"/>
</dbReference>
<dbReference type="PROSITE" id="PS50059">
    <property type="entry name" value="FKBP_PPIASE"/>
    <property type="match status" value="1"/>
</dbReference>
<name>TIG_RHOCS</name>
<feature type="chain" id="PRO_1000115571" description="Trigger factor">
    <location>
        <begin position="1"/>
        <end position="448"/>
    </location>
</feature>
<feature type="domain" description="PPIase FKBP-type" evidence="1">
    <location>
        <begin position="163"/>
        <end position="248"/>
    </location>
</feature>
<keyword id="KW-0131">Cell cycle</keyword>
<keyword id="KW-0132">Cell division</keyword>
<keyword id="KW-0143">Chaperone</keyword>
<keyword id="KW-0963">Cytoplasm</keyword>
<keyword id="KW-0413">Isomerase</keyword>
<keyword id="KW-1185">Reference proteome</keyword>
<keyword id="KW-0697">Rotamase</keyword>
<organism>
    <name type="scientific">Rhodospirillum centenum (strain ATCC 51521 / SW)</name>
    <dbReference type="NCBI Taxonomy" id="414684"/>
    <lineage>
        <taxon>Bacteria</taxon>
        <taxon>Pseudomonadati</taxon>
        <taxon>Pseudomonadota</taxon>
        <taxon>Alphaproteobacteria</taxon>
        <taxon>Rhodospirillales</taxon>
        <taxon>Rhodospirillaceae</taxon>
        <taxon>Rhodospirillum</taxon>
    </lineage>
</organism>
<reference key="1">
    <citation type="submission" date="2007-03" db="EMBL/GenBank/DDBJ databases">
        <title>Genome sequence of Rhodospirillum centenum.</title>
        <authorList>
            <person name="Touchman J.W."/>
            <person name="Bauer C."/>
            <person name="Blankenship R.E."/>
        </authorList>
    </citation>
    <scope>NUCLEOTIDE SEQUENCE [LARGE SCALE GENOMIC DNA]</scope>
    <source>
        <strain>ATCC 51521 / SW</strain>
    </source>
</reference>